<organism>
    <name type="scientific">Lysinibacillus sphaericus</name>
    <name type="common">Bacillus sphaericus</name>
    <dbReference type="NCBI Taxonomy" id="1421"/>
    <lineage>
        <taxon>Bacteria</taxon>
        <taxon>Bacillati</taxon>
        <taxon>Bacillota</taxon>
        <taxon>Bacilli</taxon>
        <taxon>Bacillales</taxon>
        <taxon>Bacillaceae</taxon>
        <taxon>Lysinibacillus</taxon>
    </lineage>
</organism>
<protein>
    <recommendedName>
        <fullName>Stage 0 sporulation protein A</fullName>
    </recommendedName>
</protein>
<feature type="chain" id="PRO_0000081232" description="Stage 0 sporulation protein A">
    <location>
        <begin position="1"/>
        <end position="263"/>
    </location>
</feature>
<feature type="domain" description="Response regulatory" evidence="3">
    <location>
        <begin position="5"/>
        <end position="123"/>
    </location>
</feature>
<feature type="DNA-binding region" description="H-T-H motif" evidence="2">
    <location>
        <begin position="195"/>
        <end position="214"/>
    </location>
</feature>
<feature type="binding site" evidence="1">
    <location>
        <position position="10"/>
    </location>
    <ligand>
        <name>Ca(2+)</name>
        <dbReference type="ChEBI" id="CHEBI:29108"/>
    </ligand>
</feature>
<feature type="binding site" evidence="1">
    <location>
        <position position="11"/>
    </location>
    <ligand>
        <name>Ca(2+)</name>
        <dbReference type="ChEBI" id="CHEBI:29108"/>
    </ligand>
</feature>
<feature type="binding site" evidence="1">
    <location>
        <position position="56"/>
    </location>
    <ligand>
        <name>Ca(2+)</name>
        <dbReference type="ChEBI" id="CHEBI:29108"/>
    </ligand>
</feature>
<feature type="modified residue" description="4-aspartylphosphate" evidence="3">
    <location>
        <position position="56"/>
    </location>
</feature>
<proteinExistence type="inferred from homology"/>
<keyword id="KW-0010">Activator</keyword>
<keyword id="KW-0106">Calcium</keyword>
<keyword id="KW-0963">Cytoplasm</keyword>
<keyword id="KW-0238">DNA-binding</keyword>
<keyword id="KW-0479">Metal-binding</keyword>
<keyword id="KW-0597">Phosphoprotein</keyword>
<keyword id="KW-0678">Repressor</keyword>
<keyword id="KW-0749">Sporulation</keyword>
<keyword id="KW-0804">Transcription</keyword>
<keyword id="KW-0805">Transcription regulation</keyword>
<keyword id="KW-0902">Two-component regulatory system</keyword>
<gene>
    <name type="primary">spo0A</name>
</gene>
<comment type="function">
    <text evidence="1">May play the central regulatory role in sporulation. It may be an element of the effector pathway responsible for the activation of sporulation genes in response to nutritional stress. Spo0A may act in concert with Spo0H (a sigma factor) to control the expression of some genes that are critical to the sporulation process. Repressor of abrB, activator of the spoIIa operon. Binds the DNA sequence 5'-TGNCGAA-3' (0A box) (By similarity).</text>
</comment>
<comment type="cofactor">
    <cofactor evidence="1">
        <name>Ca(2+)</name>
        <dbReference type="ChEBI" id="CHEBI:29108"/>
    </cofactor>
    <text evidence="1">Binds 1 Ca(2+) ion per subunit.</text>
</comment>
<comment type="subcellular location">
    <subcellularLocation>
        <location evidence="4">Cytoplasm</location>
    </subcellularLocation>
</comment>
<comment type="PTM">
    <text evidence="1">Phosphorylated by KinA and KinB.</text>
</comment>
<dbReference type="EMBL" id="U09976">
    <property type="protein sequence ID" value="AAA18877.1"/>
    <property type="molecule type" value="Unassigned_DNA"/>
</dbReference>
<dbReference type="PIR" id="S60874">
    <property type="entry name" value="S60874"/>
</dbReference>
<dbReference type="SMR" id="P42012"/>
<dbReference type="STRING" id="1421.A2J09_10125"/>
<dbReference type="GO" id="GO:0005737">
    <property type="term" value="C:cytoplasm"/>
    <property type="evidence" value="ECO:0007669"/>
    <property type="project" value="UniProtKB-SubCell"/>
</dbReference>
<dbReference type="GO" id="GO:0005509">
    <property type="term" value="F:calcium ion binding"/>
    <property type="evidence" value="ECO:0007669"/>
    <property type="project" value="InterPro"/>
</dbReference>
<dbReference type="GO" id="GO:0003677">
    <property type="term" value="F:DNA binding"/>
    <property type="evidence" value="ECO:0007669"/>
    <property type="project" value="UniProtKB-KW"/>
</dbReference>
<dbReference type="GO" id="GO:0003700">
    <property type="term" value="F:DNA-binding transcription factor activity"/>
    <property type="evidence" value="ECO:0007669"/>
    <property type="project" value="InterPro"/>
</dbReference>
<dbReference type="GO" id="GO:0051606">
    <property type="term" value="P:detection of stimulus"/>
    <property type="evidence" value="ECO:0007669"/>
    <property type="project" value="InterPro"/>
</dbReference>
<dbReference type="GO" id="GO:0000160">
    <property type="term" value="P:phosphorelay signal transduction system"/>
    <property type="evidence" value="ECO:0007669"/>
    <property type="project" value="UniProtKB-KW"/>
</dbReference>
<dbReference type="GO" id="GO:0042173">
    <property type="term" value="P:regulation of sporulation resulting in formation of a cellular spore"/>
    <property type="evidence" value="ECO:0007669"/>
    <property type="project" value="InterPro"/>
</dbReference>
<dbReference type="GO" id="GO:0030435">
    <property type="term" value="P:sporulation resulting in formation of a cellular spore"/>
    <property type="evidence" value="ECO:0007669"/>
    <property type="project" value="UniProtKB-KW"/>
</dbReference>
<dbReference type="CDD" id="cd17561">
    <property type="entry name" value="REC_Spo0A"/>
    <property type="match status" value="1"/>
</dbReference>
<dbReference type="Gene3D" id="3.40.50.2300">
    <property type="match status" value="1"/>
</dbReference>
<dbReference type="Gene3D" id="1.10.10.10">
    <property type="entry name" value="Winged helix-like DNA-binding domain superfamily/Winged helix DNA-binding domain"/>
    <property type="match status" value="1"/>
</dbReference>
<dbReference type="InterPro" id="IPR050595">
    <property type="entry name" value="Bact_response_regulator"/>
</dbReference>
<dbReference type="InterPro" id="IPR011006">
    <property type="entry name" value="CheY-like_superfamily"/>
</dbReference>
<dbReference type="InterPro" id="IPR016032">
    <property type="entry name" value="Sig_transdc_resp-reg_C-effctor"/>
</dbReference>
<dbReference type="InterPro" id="IPR001789">
    <property type="entry name" value="Sig_transdc_resp-reg_receiver"/>
</dbReference>
<dbReference type="InterPro" id="IPR014879">
    <property type="entry name" value="Spo0A_C"/>
</dbReference>
<dbReference type="InterPro" id="IPR012052">
    <property type="entry name" value="Spore_0_A"/>
</dbReference>
<dbReference type="InterPro" id="IPR036388">
    <property type="entry name" value="WH-like_DNA-bd_sf"/>
</dbReference>
<dbReference type="NCBIfam" id="TIGR02875">
    <property type="entry name" value="spore_0_A"/>
    <property type="match status" value="1"/>
</dbReference>
<dbReference type="PANTHER" id="PTHR44591:SF3">
    <property type="entry name" value="RESPONSE REGULATORY DOMAIN-CONTAINING PROTEIN"/>
    <property type="match status" value="1"/>
</dbReference>
<dbReference type="PANTHER" id="PTHR44591">
    <property type="entry name" value="STRESS RESPONSE REGULATOR PROTEIN 1"/>
    <property type="match status" value="1"/>
</dbReference>
<dbReference type="Pfam" id="PF00072">
    <property type="entry name" value="Response_reg"/>
    <property type="match status" value="1"/>
</dbReference>
<dbReference type="Pfam" id="PF08769">
    <property type="entry name" value="Spo0A_C"/>
    <property type="match status" value="1"/>
</dbReference>
<dbReference type="PIRSF" id="PIRSF002937">
    <property type="entry name" value="Res_reg_Spo0A"/>
    <property type="match status" value="1"/>
</dbReference>
<dbReference type="SMART" id="SM00448">
    <property type="entry name" value="REC"/>
    <property type="match status" value="1"/>
</dbReference>
<dbReference type="SUPFAM" id="SSF46894">
    <property type="entry name" value="C-terminal effector domain of the bipartite response regulators"/>
    <property type="match status" value="1"/>
</dbReference>
<dbReference type="SUPFAM" id="SSF52172">
    <property type="entry name" value="CheY-like"/>
    <property type="match status" value="1"/>
</dbReference>
<dbReference type="PROSITE" id="PS50110">
    <property type="entry name" value="RESPONSE_REGULATORY"/>
    <property type="match status" value="1"/>
</dbReference>
<sequence>MTKVKVAIADDNRELLKTMEHYFQGHPEIEIIATASNGKVCLQMLEEYTPDILLLDIIMPHLDGLAVLEAMYQNDRMSSIQVIMLTAFGQEDVMKQAVDLGASYFMLKPFEFDQLVQKILHCAGQKASIPKKASVLQPTTPQKLNQHQLDSTITAIIKEIGVPAHIKGYSYLREAIQMVFEDIELLGSVTKILYPEIAKKFNTTPSRVERAIRHAIEVAWNRGNYEYISSMFGYTEHHLKSKPTNSEFIAMIADKIRIDMMAS</sequence>
<reference key="1">
    <citation type="journal article" date="1994" name="Mol. Microbiol.">
        <title>Characterization of spo0A homologues in diverse Bacillus and Clostridium species identifies a probable DNA-binding domain.</title>
        <authorList>
            <person name="Brown D.P."/>
            <person name="Ganova-Raeva L."/>
            <person name="Green B.D."/>
            <person name="Wilkinson S.R."/>
            <person name="Young M."/>
            <person name="Youngman P."/>
        </authorList>
    </citation>
    <scope>NUCLEOTIDE SEQUENCE [GENOMIC DNA]</scope>
    <source>
        <strain>ATCC 14577 / DSM 28 / JCM 2502 / NCIMB 9370 / NCTC 10338 / VKM B-509</strain>
    </source>
</reference>
<evidence type="ECO:0000250" key="1"/>
<evidence type="ECO:0000255" key="2"/>
<evidence type="ECO:0000255" key="3">
    <source>
        <dbReference type="PROSITE-ProRule" id="PRU00169"/>
    </source>
</evidence>
<evidence type="ECO:0000305" key="4"/>
<accession>P42012</accession>
<name>SP0A_LYSSH</name>